<gene>
    <name type="ORF">C ORF A</name>
</gene>
<name>YVCA_VACCC</name>
<accession>P21119</accession>
<feature type="chain" id="PRO_0000099679" description="Uncharacterized 8.0 kDa protein">
    <location>
        <begin position="1"/>
        <end position="69"/>
    </location>
</feature>
<protein>
    <recommendedName>
        <fullName>Uncharacterized 8.0 kDa protein</fullName>
    </recommendedName>
</protein>
<organismHost>
    <name type="scientific">Homo sapiens</name>
    <name type="common">Human</name>
    <dbReference type="NCBI Taxonomy" id="9606"/>
</organismHost>
<organism>
    <name type="scientific">Vaccinia virus (strain Copenhagen)</name>
    <name type="common">VACV</name>
    <dbReference type="NCBI Taxonomy" id="10249"/>
    <lineage>
        <taxon>Viruses</taxon>
        <taxon>Varidnaviria</taxon>
        <taxon>Bamfordvirae</taxon>
        <taxon>Nucleocytoviricota</taxon>
        <taxon>Pokkesviricetes</taxon>
        <taxon>Chitovirales</taxon>
        <taxon>Poxviridae</taxon>
        <taxon>Chordopoxvirinae</taxon>
        <taxon>Orthopoxvirus</taxon>
        <taxon>Vaccinia virus</taxon>
    </lineage>
</organism>
<sequence length="69" mass="8028">MIERILFPTMSGTSRSPPSYLFIRKNVILDIVQIIKSPYMFAIVEIVFHSCSKTMAVTYELRYTLESHL</sequence>
<proteinExistence type="predicted"/>
<dbReference type="EMBL" id="M35027">
    <property type="protein sequence ID" value="AAA47998.1"/>
    <property type="molecule type" value="Genomic_DNA"/>
</dbReference>
<dbReference type="PIR" id="H33172">
    <property type="entry name" value="H33172"/>
</dbReference>
<dbReference type="Proteomes" id="UP000008269">
    <property type="component" value="Segment"/>
</dbReference>
<reference key="1">
    <citation type="journal article" date="1990" name="Virology">
        <title>The complete DNA sequence of vaccinia virus.</title>
        <authorList>
            <person name="Goebel S.J."/>
            <person name="Johnson G.P."/>
            <person name="Perkus M.E."/>
            <person name="Davis S.W."/>
            <person name="Winslow J.P."/>
            <person name="Paoletti E."/>
        </authorList>
    </citation>
    <scope>NUCLEOTIDE SEQUENCE [LARGE SCALE GENOMIC DNA]</scope>
</reference>
<reference key="2">
    <citation type="journal article" date="1990" name="Virology">
        <title>Appendix to 'The complete DNA sequence of vaccinia virus'.</title>
        <authorList>
            <person name="Goebel S.J."/>
            <person name="Johnson G.P."/>
            <person name="Perkus M.E."/>
            <person name="Davis S.W."/>
            <person name="Winslow J.P."/>
            <person name="Paoletti E."/>
        </authorList>
    </citation>
    <scope>COMPLETE GENOME</scope>
</reference>
<keyword id="KW-1185">Reference proteome</keyword>